<keyword id="KW-1185">Reference proteome</keyword>
<accession>Q8XKF6</accession>
<comment type="similarity">
    <text evidence="2">Belongs to the UPF0213 family.</text>
</comment>
<reference key="1">
    <citation type="journal article" date="2002" name="Proc. Natl. Acad. Sci. U.S.A.">
        <title>Complete genome sequence of Clostridium perfringens, an anaerobic flesh-eater.</title>
        <authorList>
            <person name="Shimizu T."/>
            <person name="Ohtani K."/>
            <person name="Hirakawa H."/>
            <person name="Ohshima K."/>
            <person name="Yamashita A."/>
            <person name="Shiba T."/>
            <person name="Ogasawara N."/>
            <person name="Hattori M."/>
            <person name="Kuhara S."/>
            <person name="Hayashi H."/>
        </authorList>
    </citation>
    <scope>NUCLEOTIDE SEQUENCE [LARGE SCALE GENOMIC DNA]</scope>
    <source>
        <strain>13 / Type A</strain>
    </source>
</reference>
<name>Y1444_CLOPE</name>
<dbReference type="EMBL" id="BA000016">
    <property type="protein sequence ID" value="BAB81150.1"/>
    <property type="molecule type" value="Genomic_DNA"/>
</dbReference>
<dbReference type="RefSeq" id="WP_011010448.1">
    <property type="nucleotide sequence ID" value="NC_003366.1"/>
</dbReference>
<dbReference type="SMR" id="Q8XKF6"/>
<dbReference type="STRING" id="195102.gene:10490708"/>
<dbReference type="KEGG" id="cpe:CPE1444"/>
<dbReference type="HOGENOM" id="CLU_135650_0_3_9"/>
<dbReference type="Proteomes" id="UP000000818">
    <property type="component" value="Chromosome"/>
</dbReference>
<dbReference type="CDD" id="cd10456">
    <property type="entry name" value="GIY-YIG_UPF0213"/>
    <property type="match status" value="1"/>
</dbReference>
<dbReference type="Gene3D" id="3.40.1440.10">
    <property type="entry name" value="GIY-YIG endonuclease"/>
    <property type="match status" value="1"/>
</dbReference>
<dbReference type="InterPro" id="IPR000305">
    <property type="entry name" value="GIY-YIG_endonuc"/>
</dbReference>
<dbReference type="InterPro" id="IPR035901">
    <property type="entry name" value="GIY-YIG_endonuc_sf"/>
</dbReference>
<dbReference type="InterPro" id="IPR050190">
    <property type="entry name" value="UPF0213_domain"/>
</dbReference>
<dbReference type="PANTHER" id="PTHR34477">
    <property type="entry name" value="UPF0213 PROTEIN YHBQ"/>
    <property type="match status" value="1"/>
</dbReference>
<dbReference type="PANTHER" id="PTHR34477:SF1">
    <property type="entry name" value="UPF0213 PROTEIN YHBQ"/>
    <property type="match status" value="1"/>
</dbReference>
<dbReference type="Pfam" id="PF01541">
    <property type="entry name" value="GIY-YIG"/>
    <property type="match status" value="1"/>
</dbReference>
<dbReference type="SMART" id="SM00465">
    <property type="entry name" value="GIYc"/>
    <property type="match status" value="1"/>
</dbReference>
<dbReference type="SUPFAM" id="SSF82771">
    <property type="entry name" value="GIY-YIG endonuclease"/>
    <property type="match status" value="1"/>
</dbReference>
<dbReference type="PROSITE" id="PS50164">
    <property type="entry name" value="GIY_YIG"/>
    <property type="match status" value="1"/>
</dbReference>
<sequence length="93" mass="11164">MNYVYILKCKDESLYTGWTNNLEKRIKAHNNGCGAKYTRGRGPVKLVYFEFFENKREAQSREYYIKKLTRNQKLQLISSKSIKEENYEKEINL</sequence>
<feature type="chain" id="PRO_0000161355" description="UPF0213 protein CPE1444">
    <location>
        <begin position="1"/>
        <end position="93"/>
    </location>
</feature>
<feature type="domain" description="GIY-YIG" evidence="1">
    <location>
        <begin position="1"/>
        <end position="75"/>
    </location>
</feature>
<gene>
    <name type="ordered locus">CPE1444</name>
</gene>
<protein>
    <recommendedName>
        <fullName>UPF0213 protein CPE1444</fullName>
    </recommendedName>
</protein>
<organism>
    <name type="scientific">Clostridium perfringens (strain 13 / Type A)</name>
    <dbReference type="NCBI Taxonomy" id="195102"/>
    <lineage>
        <taxon>Bacteria</taxon>
        <taxon>Bacillati</taxon>
        <taxon>Bacillota</taxon>
        <taxon>Clostridia</taxon>
        <taxon>Eubacteriales</taxon>
        <taxon>Clostridiaceae</taxon>
        <taxon>Clostridium</taxon>
    </lineage>
</organism>
<proteinExistence type="inferred from homology"/>
<evidence type="ECO:0000255" key="1">
    <source>
        <dbReference type="PROSITE-ProRule" id="PRU00977"/>
    </source>
</evidence>
<evidence type="ECO:0000305" key="2"/>